<sequence length="248" mass="28743">MGILKKTIFIGGIYGLGVYIGAVAWRLRKDVLNYESRQKSDLLIPNSNSISIYNQIADKYSRKITREEIFSGIYFLRYFLLRNAKGDVLEVGSGPGTNFPFYKWKKINTLTLVEPAEKMREIADARAKKKVPPNVLYRQFADLRQLPPNQSYDTIIQTFCICSQEKAVEQLNNYRSLLRSDGRILLIEHGKGKYKFLNRILNAYAESHYESWGCVWNRDIEQLLEDSELTIDSCKRFNFGTTYVIEAH</sequence>
<keyword id="KW-0472">Membrane</keyword>
<keyword id="KW-0489">Methyltransferase</keyword>
<keyword id="KW-0496">Mitochondrion</keyword>
<keyword id="KW-0999">Mitochondrion inner membrane</keyword>
<keyword id="KW-1185">Reference proteome</keyword>
<keyword id="KW-0808">Transferase</keyword>
<keyword id="KW-0812">Transmembrane</keyword>
<keyword id="KW-1133">Transmembrane helix</keyword>
<reference key="1">
    <citation type="journal article" date="2002" name="Nature">
        <title>The genome sequence of Schizosaccharomyces pombe.</title>
        <authorList>
            <person name="Wood V."/>
            <person name="Gwilliam R."/>
            <person name="Rajandream M.A."/>
            <person name="Lyne M.H."/>
            <person name="Lyne R."/>
            <person name="Stewart A."/>
            <person name="Sgouros J.G."/>
            <person name="Peat N."/>
            <person name="Hayles J."/>
            <person name="Baker S.G."/>
            <person name="Basham D."/>
            <person name="Bowman S."/>
            <person name="Brooks K."/>
            <person name="Brown D."/>
            <person name="Brown S."/>
            <person name="Chillingworth T."/>
            <person name="Churcher C.M."/>
            <person name="Collins M."/>
            <person name="Connor R."/>
            <person name="Cronin A."/>
            <person name="Davis P."/>
            <person name="Feltwell T."/>
            <person name="Fraser A."/>
            <person name="Gentles S."/>
            <person name="Goble A."/>
            <person name="Hamlin N."/>
            <person name="Harris D.E."/>
            <person name="Hidalgo J."/>
            <person name="Hodgson G."/>
            <person name="Holroyd S."/>
            <person name="Hornsby T."/>
            <person name="Howarth S."/>
            <person name="Huckle E.J."/>
            <person name="Hunt S."/>
            <person name="Jagels K."/>
            <person name="James K.D."/>
            <person name="Jones L."/>
            <person name="Jones M."/>
            <person name="Leather S."/>
            <person name="McDonald S."/>
            <person name="McLean J."/>
            <person name="Mooney P."/>
            <person name="Moule S."/>
            <person name="Mungall K.L."/>
            <person name="Murphy L.D."/>
            <person name="Niblett D."/>
            <person name="Odell C."/>
            <person name="Oliver K."/>
            <person name="O'Neil S."/>
            <person name="Pearson D."/>
            <person name="Quail M.A."/>
            <person name="Rabbinowitsch E."/>
            <person name="Rutherford K.M."/>
            <person name="Rutter S."/>
            <person name="Saunders D."/>
            <person name="Seeger K."/>
            <person name="Sharp S."/>
            <person name="Skelton J."/>
            <person name="Simmonds M.N."/>
            <person name="Squares R."/>
            <person name="Squares S."/>
            <person name="Stevens K."/>
            <person name="Taylor K."/>
            <person name="Taylor R.G."/>
            <person name="Tivey A."/>
            <person name="Walsh S.V."/>
            <person name="Warren T."/>
            <person name="Whitehead S."/>
            <person name="Woodward J.R."/>
            <person name="Volckaert G."/>
            <person name="Aert R."/>
            <person name="Robben J."/>
            <person name="Grymonprez B."/>
            <person name="Weltjens I."/>
            <person name="Vanstreels E."/>
            <person name="Rieger M."/>
            <person name="Schaefer M."/>
            <person name="Mueller-Auer S."/>
            <person name="Gabel C."/>
            <person name="Fuchs M."/>
            <person name="Duesterhoeft A."/>
            <person name="Fritzc C."/>
            <person name="Holzer E."/>
            <person name="Moestl D."/>
            <person name="Hilbert H."/>
            <person name="Borzym K."/>
            <person name="Langer I."/>
            <person name="Beck A."/>
            <person name="Lehrach H."/>
            <person name="Reinhardt R."/>
            <person name="Pohl T.M."/>
            <person name="Eger P."/>
            <person name="Zimmermann W."/>
            <person name="Wedler H."/>
            <person name="Wambutt R."/>
            <person name="Purnelle B."/>
            <person name="Goffeau A."/>
            <person name="Cadieu E."/>
            <person name="Dreano S."/>
            <person name="Gloux S."/>
            <person name="Lelaure V."/>
            <person name="Mottier S."/>
            <person name="Galibert F."/>
            <person name="Aves S.J."/>
            <person name="Xiang Z."/>
            <person name="Hunt C."/>
            <person name="Moore K."/>
            <person name="Hurst S.M."/>
            <person name="Lucas M."/>
            <person name="Rochet M."/>
            <person name="Gaillardin C."/>
            <person name="Tallada V.A."/>
            <person name="Garzon A."/>
            <person name="Thode G."/>
            <person name="Daga R.R."/>
            <person name="Cruzado L."/>
            <person name="Jimenez J."/>
            <person name="Sanchez M."/>
            <person name="del Rey F."/>
            <person name="Benito J."/>
            <person name="Dominguez A."/>
            <person name="Revuelta J.L."/>
            <person name="Moreno S."/>
            <person name="Armstrong J."/>
            <person name="Forsburg S.L."/>
            <person name="Cerutti L."/>
            <person name="Lowe T."/>
            <person name="McCombie W.R."/>
            <person name="Paulsen I."/>
            <person name="Potashkin J."/>
            <person name="Shpakovski G.V."/>
            <person name="Ussery D."/>
            <person name="Barrell B.G."/>
            <person name="Nurse P."/>
        </authorList>
    </citation>
    <scope>NUCLEOTIDE SEQUENCE [LARGE SCALE GENOMIC DNA]</scope>
    <source>
        <strain>972 / ATCC 24843</strain>
    </source>
</reference>
<reference key="2">
    <citation type="journal article" date="2006" name="Nat. Biotechnol.">
        <title>ORFeome cloning and global analysis of protein localization in the fission yeast Schizosaccharomyces pombe.</title>
        <authorList>
            <person name="Matsuyama A."/>
            <person name="Arai R."/>
            <person name="Yashiroda Y."/>
            <person name="Shirai A."/>
            <person name="Kamata A."/>
            <person name="Sekido S."/>
            <person name="Kobayashi Y."/>
            <person name="Hashimoto A."/>
            <person name="Hamamoto M."/>
            <person name="Hiraoka Y."/>
            <person name="Horinouchi S."/>
            <person name="Yoshida M."/>
        </authorList>
    </citation>
    <scope>SUBCELLULAR LOCATION [LARGE SCALE ANALYSIS]</scope>
</reference>
<organism>
    <name type="scientific">Schizosaccharomyces pombe (strain 972 / ATCC 24843)</name>
    <name type="common">Fission yeast</name>
    <dbReference type="NCBI Taxonomy" id="284812"/>
    <lineage>
        <taxon>Eukaryota</taxon>
        <taxon>Fungi</taxon>
        <taxon>Dikarya</taxon>
        <taxon>Ascomycota</taxon>
        <taxon>Taphrinomycotina</taxon>
        <taxon>Schizosaccharomycetes</taxon>
        <taxon>Schizosaccharomycetales</taxon>
        <taxon>Schizosaccharomycetaceae</taxon>
        <taxon>Schizosaccharomyces</taxon>
    </lineage>
</organism>
<proteinExistence type="inferred from homology"/>
<protein>
    <recommendedName>
        <fullName>Uncharacterized methyltransferase C3B9.04, mitochondrial</fullName>
        <ecNumber>2.1.1.-</ecNumber>
    </recommendedName>
</protein>
<dbReference type="EC" id="2.1.1.-"/>
<dbReference type="EMBL" id="CU329671">
    <property type="protein sequence ID" value="CAA17784.1"/>
    <property type="molecule type" value="Genomic_DNA"/>
</dbReference>
<dbReference type="PIR" id="T40343">
    <property type="entry name" value="T40343"/>
</dbReference>
<dbReference type="STRING" id="284812.O43033"/>
<dbReference type="PaxDb" id="4896-SPBC3B9.04.1"/>
<dbReference type="DNASU" id="2540448"/>
<dbReference type="EnsemblFungi" id="SPBC3B9.04.1">
    <property type="protein sequence ID" value="SPBC3B9.04.1:pep"/>
    <property type="gene ID" value="SPBC3B9.04"/>
</dbReference>
<dbReference type="KEGG" id="spo:2540448"/>
<dbReference type="PomBase" id="SPBC3B9.04"/>
<dbReference type="VEuPathDB" id="FungiDB:SPBC3B9.04"/>
<dbReference type="eggNOG" id="KOG4300">
    <property type="taxonomic scope" value="Eukaryota"/>
</dbReference>
<dbReference type="HOGENOM" id="CLU_037990_3_0_1"/>
<dbReference type="InParanoid" id="O43033"/>
<dbReference type="OMA" id="EKLMRMG"/>
<dbReference type="PhylomeDB" id="O43033"/>
<dbReference type="PRO" id="PR:O43033"/>
<dbReference type="Proteomes" id="UP000002485">
    <property type="component" value="Chromosome II"/>
</dbReference>
<dbReference type="GO" id="GO:0005743">
    <property type="term" value="C:mitochondrial inner membrane"/>
    <property type="evidence" value="ECO:0007669"/>
    <property type="project" value="UniProtKB-SubCell"/>
</dbReference>
<dbReference type="GO" id="GO:0005739">
    <property type="term" value="C:mitochondrion"/>
    <property type="evidence" value="ECO:0007005"/>
    <property type="project" value="PomBase"/>
</dbReference>
<dbReference type="GO" id="GO:0008168">
    <property type="term" value="F:methyltransferase activity"/>
    <property type="evidence" value="ECO:0000318"/>
    <property type="project" value="GO_Central"/>
</dbReference>
<dbReference type="GO" id="GO:0001734">
    <property type="term" value="F:mRNA m(6)A methyltransferase activity"/>
    <property type="evidence" value="ECO:0000266"/>
    <property type="project" value="PomBase"/>
</dbReference>
<dbReference type="GO" id="GO:0032259">
    <property type="term" value="P:methylation"/>
    <property type="evidence" value="ECO:0007669"/>
    <property type="project" value="UniProtKB-KW"/>
</dbReference>
<dbReference type="GO" id="GO:0140053">
    <property type="term" value="P:mitochondrial gene expression"/>
    <property type="evidence" value="ECO:0000305"/>
    <property type="project" value="PomBase"/>
</dbReference>
<dbReference type="CDD" id="cd02440">
    <property type="entry name" value="AdoMet_MTases"/>
    <property type="match status" value="1"/>
</dbReference>
<dbReference type="FunFam" id="3.40.50.150:FF:000371">
    <property type="entry name" value="Methyltransferase OMS1, mitochondrial"/>
    <property type="match status" value="1"/>
</dbReference>
<dbReference type="Gene3D" id="3.40.50.150">
    <property type="entry name" value="Vaccinia Virus protein VP39"/>
    <property type="match status" value="1"/>
</dbReference>
<dbReference type="InterPro" id="IPR050508">
    <property type="entry name" value="Methyltransf_Superfamily"/>
</dbReference>
<dbReference type="InterPro" id="IPR029063">
    <property type="entry name" value="SAM-dependent_MTases_sf"/>
</dbReference>
<dbReference type="PANTHER" id="PTHR42912">
    <property type="entry name" value="METHYLTRANSFERASE"/>
    <property type="match status" value="1"/>
</dbReference>
<dbReference type="PANTHER" id="PTHR42912:SF83">
    <property type="entry name" value="METHYLTRANSFERASE TYPE 11 DOMAIN-CONTAINING PROTEIN"/>
    <property type="match status" value="1"/>
</dbReference>
<dbReference type="Pfam" id="PF13489">
    <property type="entry name" value="Methyltransf_23"/>
    <property type="match status" value="1"/>
</dbReference>
<dbReference type="SUPFAM" id="SSF53335">
    <property type="entry name" value="S-adenosyl-L-methionine-dependent methyltransferases"/>
    <property type="match status" value="1"/>
</dbReference>
<feature type="chain" id="PRO_0000339156" description="Uncharacterized methyltransferase C3B9.04, mitochondrial">
    <location>
        <begin position="1"/>
        <end position="248"/>
    </location>
</feature>
<feature type="transmembrane region" description="Helical" evidence="2">
    <location>
        <begin position="7"/>
        <end position="25"/>
    </location>
</feature>
<accession>O43033</accession>
<evidence type="ECO:0000250" key="1"/>
<evidence type="ECO:0000255" key="2"/>
<evidence type="ECO:0000305" key="3"/>
<name>YGU4_SCHPO</name>
<gene>
    <name type="ORF">SPBC3B9.04</name>
</gene>
<comment type="function">
    <text evidence="1">Probable methyltransferase.</text>
</comment>
<comment type="subcellular location">
    <subcellularLocation>
        <location evidence="1">Mitochondrion inner membrane</location>
        <topology evidence="1">Single-pass membrane protein</topology>
    </subcellularLocation>
</comment>
<comment type="similarity">
    <text evidence="3">Belongs to the methyltransferase superfamily. METL family.</text>
</comment>